<evidence type="ECO:0000255" key="1">
    <source>
        <dbReference type="HAMAP-Rule" id="MF_00787"/>
    </source>
</evidence>
<reference key="1">
    <citation type="journal article" date="1996" name="Science">
        <title>Complete genome sequence of the methanogenic archaeon, Methanococcus jannaschii.</title>
        <authorList>
            <person name="Bult C.J."/>
            <person name="White O."/>
            <person name="Olsen G.J."/>
            <person name="Zhou L."/>
            <person name="Fleischmann R.D."/>
            <person name="Sutton G.G."/>
            <person name="Blake J.A."/>
            <person name="FitzGerald L.M."/>
            <person name="Clayton R.A."/>
            <person name="Gocayne J.D."/>
            <person name="Kerlavage A.R."/>
            <person name="Dougherty B.A."/>
            <person name="Tomb J.-F."/>
            <person name="Adams M.D."/>
            <person name="Reich C.I."/>
            <person name="Overbeek R."/>
            <person name="Kirkness E.F."/>
            <person name="Weinstock K.G."/>
            <person name="Merrick J.M."/>
            <person name="Glodek A."/>
            <person name="Scott J.L."/>
            <person name="Geoghagen N.S.M."/>
            <person name="Weidman J.F."/>
            <person name="Fuhrmann J.L."/>
            <person name="Nguyen D."/>
            <person name="Utterback T.R."/>
            <person name="Kelley J.M."/>
            <person name="Peterson J.D."/>
            <person name="Sadow P.W."/>
            <person name="Hanna M.C."/>
            <person name="Cotton M.D."/>
            <person name="Roberts K.M."/>
            <person name="Hurst M.A."/>
            <person name="Kaine B.P."/>
            <person name="Borodovsky M."/>
            <person name="Klenk H.-P."/>
            <person name="Fraser C.M."/>
            <person name="Smith H.O."/>
            <person name="Woese C.R."/>
            <person name="Venter J.C."/>
        </authorList>
    </citation>
    <scope>NUCLEOTIDE SEQUENCE [LARGE SCALE GENOMIC DNA]</scope>
    <source>
        <strain>ATCC 43067 / DSM 2661 / JAL-1 / JCM 10045 / NBRC 100440</strain>
    </source>
</reference>
<accession>Q60342</accession>
<protein>
    <recommendedName>
        <fullName evidence="1">Cobalt-precorrin-5B C(1)-methyltransferase</fullName>
        <ecNumber evidence="1">2.1.1.195</ecNumber>
    </recommendedName>
    <alternativeName>
        <fullName evidence="1">Cobalt-precorrin-6A synthase</fullName>
    </alternativeName>
</protein>
<name>CBID_METJA</name>
<dbReference type="EC" id="2.1.1.195" evidence="1"/>
<dbReference type="EMBL" id="L77117">
    <property type="protein sequence ID" value="AAB98004.1"/>
    <property type="molecule type" value="Genomic_DNA"/>
</dbReference>
<dbReference type="PIR" id="F64302">
    <property type="entry name" value="F64302"/>
</dbReference>
<dbReference type="RefSeq" id="WP_010869514.1">
    <property type="nucleotide sequence ID" value="NC_000909.1"/>
</dbReference>
<dbReference type="SMR" id="Q60342"/>
<dbReference type="FunCoup" id="Q60342">
    <property type="interactions" value="110"/>
</dbReference>
<dbReference type="STRING" id="243232.MJ_0022"/>
<dbReference type="PaxDb" id="243232-MJ_0022"/>
<dbReference type="EnsemblBacteria" id="AAB98004">
    <property type="protein sequence ID" value="AAB98004"/>
    <property type="gene ID" value="MJ_0022"/>
</dbReference>
<dbReference type="GeneID" id="1450860"/>
<dbReference type="KEGG" id="mja:MJ_0022"/>
<dbReference type="eggNOG" id="arCOG04383">
    <property type="taxonomic scope" value="Archaea"/>
</dbReference>
<dbReference type="HOGENOM" id="CLU_041273_1_0_2"/>
<dbReference type="InParanoid" id="Q60342"/>
<dbReference type="OrthoDB" id="10423at2157"/>
<dbReference type="PhylomeDB" id="Q60342"/>
<dbReference type="UniPathway" id="UPA00148">
    <property type="reaction ID" value="UER00227"/>
</dbReference>
<dbReference type="Proteomes" id="UP000000805">
    <property type="component" value="Chromosome"/>
</dbReference>
<dbReference type="GO" id="GO:0043780">
    <property type="term" value="F:cobalt-precorrin-5B C1-methyltransferase activity"/>
    <property type="evidence" value="ECO:0007669"/>
    <property type="project" value="RHEA"/>
</dbReference>
<dbReference type="GO" id="GO:0019251">
    <property type="term" value="P:anaerobic cobalamin biosynthetic process"/>
    <property type="evidence" value="ECO:0007669"/>
    <property type="project" value="UniProtKB-UniRule"/>
</dbReference>
<dbReference type="GO" id="GO:0032259">
    <property type="term" value="P:methylation"/>
    <property type="evidence" value="ECO:0007669"/>
    <property type="project" value="UniProtKB-KW"/>
</dbReference>
<dbReference type="Gene3D" id="3.30.2110.10">
    <property type="entry name" value="CbiD-like"/>
    <property type="match status" value="1"/>
</dbReference>
<dbReference type="HAMAP" id="MF_00787">
    <property type="entry name" value="CbiD"/>
    <property type="match status" value="1"/>
</dbReference>
<dbReference type="InterPro" id="IPR002748">
    <property type="entry name" value="CbiD"/>
</dbReference>
<dbReference type="InterPro" id="IPR036074">
    <property type="entry name" value="CbiD_sf"/>
</dbReference>
<dbReference type="NCBIfam" id="TIGR00312">
    <property type="entry name" value="cbiD"/>
    <property type="match status" value="1"/>
</dbReference>
<dbReference type="PANTHER" id="PTHR35863">
    <property type="entry name" value="COBALT-PRECORRIN-5B C(1)-METHYLTRANSFERASE"/>
    <property type="match status" value="1"/>
</dbReference>
<dbReference type="PANTHER" id="PTHR35863:SF1">
    <property type="entry name" value="COBALT-PRECORRIN-5B C(1)-METHYLTRANSFERASE"/>
    <property type="match status" value="1"/>
</dbReference>
<dbReference type="Pfam" id="PF01888">
    <property type="entry name" value="CbiD"/>
    <property type="match status" value="1"/>
</dbReference>
<dbReference type="PIRSF" id="PIRSF026782">
    <property type="entry name" value="CbiD"/>
    <property type="match status" value="1"/>
</dbReference>
<dbReference type="SUPFAM" id="SSF111342">
    <property type="entry name" value="CbiD-like"/>
    <property type="match status" value="1"/>
</dbReference>
<comment type="function">
    <text evidence="1">Catalyzes the methylation of C-1 in cobalt-precorrin-5B to form cobalt-precorrin-6A.</text>
</comment>
<comment type="catalytic activity">
    <reaction evidence="1">
        <text>Co-precorrin-5B + S-adenosyl-L-methionine = Co-precorrin-6A + S-adenosyl-L-homocysteine</text>
        <dbReference type="Rhea" id="RHEA:26285"/>
        <dbReference type="ChEBI" id="CHEBI:57856"/>
        <dbReference type="ChEBI" id="CHEBI:59789"/>
        <dbReference type="ChEBI" id="CHEBI:60063"/>
        <dbReference type="ChEBI" id="CHEBI:60064"/>
        <dbReference type="EC" id="2.1.1.195"/>
    </reaction>
</comment>
<comment type="pathway">
    <text evidence="1">Cofactor biosynthesis; adenosylcobalamin biosynthesis; cob(II)yrinate a,c-diamide from sirohydrochlorin (anaerobic route): step 6/10.</text>
</comment>
<comment type="similarity">
    <text evidence="1">Belongs to the CbiD family.</text>
</comment>
<keyword id="KW-0169">Cobalamin biosynthesis</keyword>
<keyword id="KW-0489">Methyltransferase</keyword>
<keyword id="KW-1185">Reference proteome</keyword>
<keyword id="KW-0949">S-adenosyl-L-methionine</keyword>
<keyword id="KW-0808">Transferase</keyword>
<organism>
    <name type="scientific">Methanocaldococcus jannaschii (strain ATCC 43067 / DSM 2661 / JAL-1 / JCM 10045 / NBRC 100440)</name>
    <name type="common">Methanococcus jannaschii</name>
    <dbReference type="NCBI Taxonomy" id="243232"/>
    <lineage>
        <taxon>Archaea</taxon>
        <taxon>Methanobacteriati</taxon>
        <taxon>Methanobacteriota</taxon>
        <taxon>Methanomada group</taxon>
        <taxon>Methanococci</taxon>
        <taxon>Methanococcales</taxon>
        <taxon>Methanocaldococcaceae</taxon>
        <taxon>Methanocaldococcus</taxon>
    </lineage>
</organism>
<feature type="chain" id="PRO_0000141692" description="Cobalt-precorrin-5B C(1)-methyltransferase">
    <location>
        <begin position="1"/>
        <end position="362"/>
    </location>
</feature>
<proteinExistence type="inferred from homology"/>
<gene>
    <name evidence="1" type="primary">cbiD</name>
    <name type="ordered locus">MJ0022</name>
</gene>
<sequence>MIYDFRKKSKFGYTTGSCAAAGAYSALYYLKFGKKLSYVEIENLNGDKLIIPIEKIEKCGNKAKAVVIKDAGGDIDITNGIEIITEVELKKGKKDVIIKGGEGVGIVTKNGLQVKKGEPAINPKPREMIRNNLLKLLNDDEVVEVTISIPKGKELAKKTLNPKLGIVGGLSILGTTGIVRPMSNEAYMNSLAPQIDVALANGYKRLIFVPGNIGTKYAKQLLNANDDEIIEVSNFWGFMLDKAKEKGVEEILIFGHAGKIIKLAGGIYNTHSKVADCRNEILAAYSSLFIDDKEAIKKILYSNTTEEVIKILEEKGVLNDVFNFIAKRVVERLSERWKGIKFSCIIINMKGEVLGSYIWNKK</sequence>